<protein>
    <recommendedName>
        <fullName evidence="1">Tryptophan synthase beta chain</fullName>
        <ecNumber evidence="1">4.2.1.20</ecNumber>
    </recommendedName>
</protein>
<feature type="chain" id="PRO_1000018401" description="Tryptophan synthase beta chain">
    <location>
        <begin position="1"/>
        <end position="419"/>
    </location>
</feature>
<feature type="modified residue" description="N6-(pyridoxal phosphate)lysine" evidence="1">
    <location>
        <position position="98"/>
    </location>
</feature>
<dbReference type="EC" id="4.2.1.20" evidence="1"/>
<dbReference type="EMBL" id="CP000377">
    <property type="protein sequence ID" value="ABF62939.1"/>
    <property type="molecule type" value="Genomic_DNA"/>
</dbReference>
<dbReference type="RefSeq" id="WP_011537573.1">
    <property type="nucleotide sequence ID" value="NC_008044.1"/>
</dbReference>
<dbReference type="SMR" id="Q1GK77"/>
<dbReference type="STRING" id="292414.TM1040_0206"/>
<dbReference type="KEGG" id="sit:TM1040_0206"/>
<dbReference type="eggNOG" id="COG0133">
    <property type="taxonomic scope" value="Bacteria"/>
</dbReference>
<dbReference type="HOGENOM" id="CLU_016734_3_1_5"/>
<dbReference type="OrthoDB" id="9766131at2"/>
<dbReference type="UniPathway" id="UPA00035">
    <property type="reaction ID" value="UER00044"/>
</dbReference>
<dbReference type="Proteomes" id="UP000000636">
    <property type="component" value="Chromosome"/>
</dbReference>
<dbReference type="GO" id="GO:0005737">
    <property type="term" value="C:cytoplasm"/>
    <property type="evidence" value="ECO:0007669"/>
    <property type="project" value="TreeGrafter"/>
</dbReference>
<dbReference type="GO" id="GO:0004834">
    <property type="term" value="F:tryptophan synthase activity"/>
    <property type="evidence" value="ECO:0007669"/>
    <property type="project" value="UniProtKB-UniRule"/>
</dbReference>
<dbReference type="CDD" id="cd06446">
    <property type="entry name" value="Trp-synth_B"/>
    <property type="match status" value="1"/>
</dbReference>
<dbReference type="FunFam" id="3.40.50.1100:FF:000001">
    <property type="entry name" value="Tryptophan synthase beta chain"/>
    <property type="match status" value="1"/>
</dbReference>
<dbReference type="FunFam" id="3.40.50.1100:FF:000004">
    <property type="entry name" value="Tryptophan synthase beta chain"/>
    <property type="match status" value="1"/>
</dbReference>
<dbReference type="Gene3D" id="3.40.50.1100">
    <property type="match status" value="2"/>
</dbReference>
<dbReference type="HAMAP" id="MF_00133">
    <property type="entry name" value="Trp_synth_beta"/>
    <property type="match status" value="1"/>
</dbReference>
<dbReference type="InterPro" id="IPR006653">
    <property type="entry name" value="Trp_synth_b_CS"/>
</dbReference>
<dbReference type="InterPro" id="IPR006654">
    <property type="entry name" value="Trp_synth_beta"/>
</dbReference>
<dbReference type="InterPro" id="IPR023026">
    <property type="entry name" value="Trp_synth_beta/beta-like"/>
</dbReference>
<dbReference type="InterPro" id="IPR001926">
    <property type="entry name" value="TrpB-like_PALP"/>
</dbReference>
<dbReference type="InterPro" id="IPR036052">
    <property type="entry name" value="TrpB-like_PALP_sf"/>
</dbReference>
<dbReference type="NCBIfam" id="TIGR00263">
    <property type="entry name" value="trpB"/>
    <property type="match status" value="1"/>
</dbReference>
<dbReference type="PANTHER" id="PTHR48077:SF3">
    <property type="entry name" value="TRYPTOPHAN SYNTHASE"/>
    <property type="match status" value="1"/>
</dbReference>
<dbReference type="PANTHER" id="PTHR48077">
    <property type="entry name" value="TRYPTOPHAN SYNTHASE-RELATED"/>
    <property type="match status" value="1"/>
</dbReference>
<dbReference type="Pfam" id="PF00291">
    <property type="entry name" value="PALP"/>
    <property type="match status" value="1"/>
</dbReference>
<dbReference type="PIRSF" id="PIRSF001413">
    <property type="entry name" value="Trp_syn_beta"/>
    <property type="match status" value="1"/>
</dbReference>
<dbReference type="SUPFAM" id="SSF53686">
    <property type="entry name" value="Tryptophan synthase beta subunit-like PLP-dependent enzymes"/>
    <property type="match status" value="1"/>
</dbReference>
<dbReference type="PROSITE" id="PS00168">
    <property type="entry name" value="TRP_SYNTHASE_BETA"/>
    <property type="match status" value="1"/>
</dbReference>
<proteinExistence type="inferred from homology"/>
<comment type="function">
    <text evidence="1">The beta subunit is responsible for the synthesis of L-tryptophan from indole and L-serine.</text>
</comment>
<comment type="catalytic activity">
    <reaction evidence="1">
        <text>(1S,2R)-1-C-(indol-3-yl)glycerol 3-phosphate + L-serine = D-glyceraldehyde 3-phosphate + L-tryptophan + H2O</text>
        <dbReference type="Rhea" id="RHEA:10532"/>
        <dbReference type="ChEBI" id="CHEBI:15377"/>
        <dbReference type="ChEBI" id="CHEBI:33384"/>
        <dbReference type="ChEBI" id="CHEBI:57912"/>
        <dbReference type="ChEBI" id="CHEBI:58866"/>
        <dbReference type="ChEBI" id="CHEBI:59776"/>
        <dbReference type="EC" id="4.2.1.20"/>
    </reaction>
</comment>
<comment type="cofactor">
    <cofactor evidence="1">
        <name>pyridoxal 5'-phosphate</name>
        <dbReference type="ChEBI" id="CHEBI:597326"/>
    </cofactor>
</comment>
<comment type="pathway">
    <text evidence="1">Amino-acid biosynthesis; L-tryptophan biosynthesis; L-tryptophan from chorismate: step 5/5.</text>
</comment>
<comment type="subunit">
    <text evidence="1">Tetramer of two alpha and two beta chains.</text>
</comment>
<comment type="similarity">
    <text evidence="1">Belongs to the TrpB family.</text>
</comment>
<evidence type="ECO:0000255" key="1">
    <source>
        <dbReference type="HAMAP-Rule" id="MF_00133"/>
    </source>
</evidence>
<sequence length="419" mass="45918">MAEDLINSFMNGPDENGRFGIFGGRFVSETLMPLILSLEEEYEKAKVDPDFWAEMDDLWKNYVGRPSPLYFAERLTNHLGGAKVYMKRDELNHTGAHKVNNVLGQILLARRMGKTRIIAETGAGQHGVATATVCAKFGLKCVVYMGAHDVRRQAPNVFRMRLLGAEVIPVTSGRGTLKDAMNDALRDWVTNVRDTFYCIGTVAGPHPYPAMVRDFQSVIGKEVRWQLAEQEGEGRLPDTVIAAIGGGSNAMGLFHPFLDDPSVNIIGVEAGGKGVDEKMEHCASLTGGRPGVLHGNRTYLLQDDDGQILEGFSISAGLDYPGIGPEHAWLHETGRAQYVSITDKEALEAFQLSCAMEGIIPALEPSHALAHVTKIAPELPKDHIIVMNMCGRGDKDIFTVARHLGFDMSDTEEGRDLEE</sequence>
<gene>
    <name evidence="1" type="primary">trpB</name>
    <name type="ordered locus">TM1040_0206</name>
</gene>
<organism>
    <name type="scientific">Ruegeria sp. (strain TM1040)</name>
    <name type="common">Silicibacter sp.</name>
    <dbReference type="NCBI Taxonomy" id="292414"/>
    <lineage>
        <taxon>Bacteria</taxon>
        <taxon>Pseudomonadati</taxon>
        <taxon>Pseudomonadota</taxon>
        <taxon>Alphaproteobacteria</taxon>
        <taxon>Rhodobacterales</taxon>
        <taxon>Roseobacteraceae</taxon>
        <taxon>Ruegeria</taxon>
    </lineage>
</organism>
<accession>Q1GK77</accession>
<keyword id="KW-0028">Amino-acid biosynthesis</keyword>
<keyword id="KW-0057">Aromatic amino acid biosynthesis</keyword>
<keyword id="KW-0456">Lyase</keyword>
<keyword id="KW-0663">Pyridoxal phosphate</keyword>
<keyword id="KW-1185">Reference proteome</keyword>
<keyword id="KW-0822">Tryptophan biosynthesis</keyword>
<name>TRPB_RUEST</name>
<reference key="1">
    <citation type="submission" date="2006-05" db="EMBL/GenBank/DDBJ databases">
        <title>Complete sequence of chromosome of Silicibacter sp. TM1040.</title>
        <authorList>
            <consortium name="US DOE Joint Genome Institute"/>
            <person name="Copeland A."/>
            <person name="Lucas S."/>
            <person name="Lapidus A."/>
            <person name="Barry K."/>
            <person name="Detter J.C."/>
            <person name="Glavina del Rio T."/>
            <person name="Hammon N."/>
            <person name="Israni S."/>
            <person name="Dalin E."/>
            <person name="Tice H."/>
            <person name="Pitluck S."/>
            <person name="Brettin T."/>
            <person name="Bruce D."/>
            <person name="Han C."/>
            <person name="Tapia R."/>
            <person name="Goodwin L."/>
            <person name="Thompson L.S."/>
            <person name="Gilna P."/>
            <person name="Schmutz J."/>
            <person name="Larimer F."/>
            <person name="Land M."/>
            <person name="Hauser L."/>
            <person name="Kyrpides N."/>
            <person name="Kim E."/>
            <person name="Belas R."/>
            <person name="Moran M.A."/>
            <person name="Buchan A."/>
            <person name="Gonzalez J.M."/>
            <person name="Schell M.A."/>
            <person name="Sun F."/>
            <person name="Richardson P."/>
        </authorList>
    </citation>
    <scope>NUCLEOTIDE SEQUENCE [LARGE SCALE GENOMIC DNA]</scope>
    <source>
        <strain>TM1040</strain>
    </source>
</reference>